<name>SYS_SORC5</name>
<dbReference type="EC" id="6.1.1.11" evidence="1"/>
<dbReference type="EMBL" id="AM746676">
    <property type="protein sequence ID" value="CAN98306.1"/>
    <property type="molecule type" value="Genomic_DNA"/>
</dbReference>
<dbReference type="RefSeq" id="WP_012240745.1">
    <property type="nucleotide sequence ID" value="NC_010162.1"/>
</dbReference>
<dbReference type="SMR" id="A9FM88"/>
<dbReference type="STRING" id="448385.sce8136"/>
<dbReference type="KEGG" id="scl:sce8136"/>
<dbReference type="eggNOG" id="COG0172">
    <property type="taxonomic scope" value="Bacteria"/>
</dbReference>
<dbReference type="HOGENOM" id="CLU_023797_1_1_7"/>
<dbReference type="OrthoDB" id="9804647at2"/>
<dbReference type="BioCyc" id="SCEL448385:SCE_RS41670-MONOMER"/>
<dbReference type="UniPathway" id="UPA00906">
    <property type="reaction ID" value="UER00895"/>
</dbReference>
<dbReference type="Proteomes" id="UP000002139">
    <property type="component" value="Chromosome"/>
</dbReference>
<dbReference type="GO" id="GO:0005737">
    <property type="term" value="C:cytoplasm"/>
    <property type="evidence" value="ECO:0007669"/>
    <property type="project" value="UniProtKB-SubCell"/>
</dbReference>
<dbReference type="GO" id="GO:0005524">
    <property type="term" value="F:ATP binding"/>
    <property type="evidence" value="ECO:0007669"/>
    <property type="project" value="UniProtKB-UniRule"/>
</dbReference>
<dbReference type="GO" id="GO:0004828">
    <property type="term" value="F:serine-tRNA ligase activity"/>
    <property type="evidence" value="ECO:0007669"/>
    <property type="project" value="UniProtKB-UniRule"/>
</dbReference>
<dbReference type="GO" id="GO:0016260">
    <property type="term" value="P:selenocysteine biosynthetic process"/>
    <property type="evidence" value="ECO:0007669"/>
    <property type="project" value="UniProtKB-UniRule"/>
</dbReference>
<dbReference type="GO" id="GO:0006434">
    <property type="term" value="P:seryl-tRNA aminoacylation"/>
    <property type="evidence" value="ECO:0007669"/>
    <property type="project" value="UniProtKB-UniRule"/>
</dbReference>
<dbReference type="CDD" id="cd00770">
    <property type="entry name" value="SerRS_core"/>
    <property type="match status" value="1"/>
</dbReference>
<dbReference type="Gene3D" id="3.30.930.10">
    <property type="entry name" value="Bira Bifunctional Protein, Domain 2"/>
    <property type="match status" value="1"/>
</dbReference>
<dbReference type="Gene3D" id="1.10.287.40">
    <property type="entry name" value="Serine-tRNA synthetase, tRNA binding domain"/>
    <property type="match status" value="1"/>
</dbReference>
<dbReference type="HAMAP" id="MF_00176">
    <property type="entry name" value="Ser_tRNA_synth_type1"/>
    <property type="match status" value="1"/>
</dbReference>
<dbReference type="InterPro" id="IPR002314">
    <property type="entry name" value="aa-tRNA-synt_IIb"/>
</dbReference>
<dbReference type="InterPro" id="IPR006195">
    <property type="entry name" value="aa-tRNA-synth_II"/>
</dbReference>
<dbReference type="InterPro" id="IPR045864">
    <property type="entry name" value="aa-tRNA-synth_II/BPL/LPL"/>
</dbReference>
<dbReference type="InterPro" id="IPR002317">
    <property type="entry name" value="Ser-tRNA-ligase_type_1"/>
</dbReference>
<dbReference type="InterPro" id="IPR015866">
    <property type="entry name" value="Ser-tRNA-synth_1_N"/>
</dbReference>
<dbReference type="InterPro" id="IPR042103">
    <property type="entry name" value="SerRS_1_N_sf"/>
</dbReference>
<dbReference type="InterPro" id="IPR033729">
    <property type="entry name" value="SerRS_core"/>
</dbReference>
<dbReference type="InterPro" id="IPR010978">
    <property type="entry name" value="tRNA-bd_arm"/>
</dbReference>
<dbReference type="NCBIfam" id="TIGR00414">
    <property type="entry name" value="serS"/>
    <property type="match status" value="1"/>
</dbReference>
<dbReference type="PANTHER" id="PTHR43697:SF1">
    <property type="entry name" value="SERINE--TRNA LIGASE"/>
    <property type="match status" value="1"/>
</dbReference>
<dbReference type="PANTHER" id="PTHR43697">
    <property type="entry name" value="SERYL-TRNA SYNTHETASE"/>
    <property type="match status" value="1"/>
</dbReference>
<dbReference type="Pfam" id="PF02403">
    <property type="entry name" value="Seryl_tRNA_N"/>
    <property type="match status" value="1"/>
</dbReference>
<dbReference type="Pfam" id="PF00587">
    <property type="entry name" value="tRNA-synt_2b"/>
    <property type="match status" value="1"/>
</dbReference>
<dbReference type="PIRSF" id="PIRSF001529">
    <property type="entry name" value="Ser-tRNA-synth_IIa"/>
    <property type="match status" value="1"/>
</dbReference>
<dbReference type="PRINTS" id="PR00981">
    <property type="entry name" value="TRNASYNTHSER"/>
</dbReference>
<dbReference type="SUPFAM" id="SSF55681">
    <property type="entry name" value="Class II aaRS and biotin synthetases"/>
    <property type="match status" value="1"/>
</dbReference>
<dbReference type="SUPFAM" id="SSF46589">
    <property type="entry name" value="tRNA-binding arm"/>
    <property type="match status" value="1"/>
</dbReference>
<dbReference type="PROSITE" id="PS50862">
    <property type="entry name" value="AA_TRNA_LIGASE_II"/>
    <property type="match status" value="1"/>
</dbReference>
<evidence type="ECO:0000255" key="1">
    <source>
        <dbReference type="HAMAP-Rule" id="MF_00176"/>
    </source>
</evidence>
<comment type="function">
    <text evidence="1">Catalyzes the attachment of serine to tRNA(Ser). Is also able to aminoacylate tRNA(Sec) with serine, to form the misacylated tRNA L-seryl-tRNA(Sec), which will be further converted into selenocysteinyl-tRNA(Sec).</text>
</comment>
<comment type="catalytic activity">
    <reaction evidence="1">
        <text>tRNA(Ser) + L-serine + ATP = L-seryl-tRNA(Ser) + AMP + diphosphate + H(+)</text>
        <dbReference type="Rhea" id="RHEA:12292"/>
        <dbReference type="Rhea" id="RHEA-COMP:9669"/>
        <dbReference type="Rhea" id="RHEA-COMP:9703"/>
        <dbReference type="ChEBI" id="CHEBI:15378"/>
        <dbReference type="ChEBI" id="CHEBI:30616"/>
        <dbReference type="ChEBI" id="CHEBI:33019"/>
        <dbReference type="ChEBI" id="CHEBI:33384"/>
        <dbReference type="ChEBI" id="CHEBI:78442"/>
        <dbReference type="ChEBI" id="CHEBI:78533"/>
        <dbReference type="ChEBI" id="CHEBI:456215"/>
        <dbReference type="EC" id="6.1.1.11"/>
    </reaction>
</comment>
<comment type="catalytic activity">
    <reaction evidence="1">
        <text>tRNA(Sec) + L-serine + ATP = L-seryl-tRNA(Sec) + AMP + diphosphate + H(+)</text>
        <dbReference type="Rhea" id="RHEA:42580"/>
        <dbReference type="Rhea" id="RHEA-COMP:9742"/>
        <dbReference type="Rhea" id="RHEA-COMP:10128"/>
        <dbReference type="ChEBI" id="CHEBI:15378"/>
        <dbReference type="ChEBI" id="CHEBI:30616"/>
        <dbReference type="ChEBI" id="CHEBI:33019"/>
        <dbReference type="ChEBI" id="CHEBI:33384"/>
        <dbReference type="ChEBI" id="CHEBI:78442"/>
        <dbReference type="ChEBI" id="CHEBI:78533"/>
        <dbReference type="ChEBI" id="CHEBI:456215"/>
        <dbReference type="EC" id="6.1.1.11"/>
    </reaction>
</comment>
<comment type="pathway">
    <text evidence="1">Aminoacyl-tRNA biosynthesis; selenocysteinyl-tRNA(Sec) biosynthesis; L-seryl-tRNA(Sec) from L-serine and tRNA(Sec): step 1/1.</text>
</comment>
<comment type="subunit">
    <text evidence="1">Homodimer. The tRNA molecule binds across the dimer.</text>
</comment>
<comment type="subcellular location">
    <subcellularLocation>
        <location evidence="1">Cytoplasm</location>
    </subcellularLocation>
</comment>
<comment type="domain">
    <text evidence="1">Consists of two distinct domains, a catalytic core and a N-terminal extension that is involved in tRNA binding.</text>
</comment>
<comment type="similarity">
    <text evidence="1">Belongs to the class-II aminoacyl-tRNA synthetase family. Type-1 seryl-tRNA synthetase subfamily.</text>
</comment>
<accession>A9FM88</accession>
<keyword id="KW-0030">Aminoacyl-tRNA synthetase</keyword>
<keyword id="KW-0067">ATP-binding</keyword>
<keyword id="KW-0963">Cytoplasm</keyword>
<keyword id="KW-0436">Ligase</keyword>
<keyword id="KW-0547">Nucleotide-binding</keyword>
<keyword id="KW-0648">Protein biosynthesis</keyword>
<keyword id="KW-1185">Reference proteome</keyword>
<gene>
    <name evidence="1" type="primary">serS</name>
    <name type="ordered locus">sce8136</name>
</gene>
<proteinExistence type="inferred from homology"/>
<organism>
    <name type="scientific">Sorangium cellulosum (strain So ce56)</name>
    <name type="common">Polyangium cellulosum (strain So ce56)</name>
    <dbReference type="NCBI Taxonomy" id="448385"/>
    <lineage>
        <taxon>Bacteria</taxon>
        <taxon>Pseudomonadati</taxon>
        <taxon>Myxococcota</taxon>
        <taxon>Polyangia</taxon>
        <taxon>Polyangiales</taxon>
        <taxon>Polyangiaceae</taxon>
        <taxon>Sorangium</taxon>
    </lineage>
</organism>
<feature type="chain" id="PRO_1000077217" description="Serine--tRNA ligase">
    <location>
        <begin position="1"/>
        <end position="433"/>
    </location>
</feature>
<feature type="binding site" evidence="1">
    <location>
        <begin position="239"/>
        <end position="241"/>
    </location>
    <ligand>
        <name>L-serine</name>
        <dbReference type="ChEBI" id="CHEBI:33384"/>
    </ligand>
</feature>
<feature type="binding site" evidence="1">
    <location>
        <begin position="270"/>
        <end position="272"/>
    </location>
    <ligand>
        <name>ATP</name>
        <dbReference type="ChEBI" id="CHEBI:30616"/>
    </ligand>
</feature>
<feature type="binding site" evidence="1">
    <location>
        <position position="293"/>
    </location>
    <ligand>
        <name>L-serine</name>
        <dbReference type="ChEBI" id="CHEBI:33384"/>
    </ligand>
</feature>
<feature type="binding site" evidence="1">
    <location>
        <begin position="357"/>
        <end position="360"/>
    </location>
    <ligand>
        <name>ATP</name>
        <dbReference type="ChEBI" id="CHEBI:30616"/>
    </ligand>
</feature>
<feature type="binding site" evidence="1">
    <location>
        <position position="393"/>
    </location>
    <ligand>
        <name>L-serine</name>
        <dbReference type="ChEBI" id="CHEBI:33384"/>
    </ligand>
</feature>
<protein>
    <recommendedName>
        <fullName evidence="1">Serine--tRNA ligase</fullName>
        <ecNumber evidence="1">6.1.1.11</ecNumber>
    </recommendedName>
    <alternativeName>
        <fullName evidence="1">Seryl-tRNA synthetase</fullName>
        <shortName evidence="1">SerRS</shortName>
    </alternativeName>
    <alternativeName>
        <fullName evidence="1">Seryl-tRNA(Ser/Sec) synthetase</fullName>
    </alternativeName>
</protein>
<sequence length="433" mass="47973">MLDPRHVAEHLDEVRAALALRSPAAAASLGDDFASTVSARRSNIQELERWQAERNAANEAMARLDKKSPEFAQKRDELKALSTRIKEAEQVVSELEKRMTELLSVVPNLPDPSVPVGAGEEGNVVVRAWGEKPSFSFAPKSHWDIGTALGLLDFERAAKLSGARFTVLMGAAARLERALISFMLDLHTREQGYLEVLPPFLVKDTALFGTGNLPKFAEDLFKTQKSDPERAYDLYLIPTAEVPVTNLHADEILDGASLPIAYAAYTPCFRSEAGSHGRDVRGLIRQHQFDKVELVRFSAPEDSARQHELLTSHAEEVLKRLGLHYRVSALCTGDLGFGSQKTYDLEVWLPGQGVYREISSCSNFGDFQARRAQIRYRPEPKAKPRLVHTMNGSALAVGRTVIAILEQYQQADGTVVVPEPLRAFMGCEVLRGR</sequence>
<reference key="1">
    <citation type="journal article" date="2007" name="Nat. Biotechnol.">
        <title>Complete genome sequence of the myxobacterium Sorangium cellulosum.</title>
        <authorList>
            <person name="Schneiker S."/>
            <person name="Perlova O."/>
            <person name="Kaiser O."/>
            <person name="Gerth K."/>
            <person name="Alici A."/>
            <person name="Altmeyer M.O."/>
            <person name="Bartels D."/>
            <person name="Bekel T."/>
            <person name="Beyer S."/>
            <person name="Bode E."/>
            <person name="Bode H.B."/>
            <person name="Bolten C.J."/>
            <person name="Choudhuri J.V."/>
            <person name="Doss S."/>
            <person name="Elnakady Y.A."/>
            <person name="Frank B."/>
            <person name="Gaigalat L."/>
            <person name="Goesmann A."/>
            <person name="Groeger C."/>
            <person name="Gross F."/>
            <person name="Jelsbak L."/>
            <person name="Jelsbak L."/>
            <person name="Kalinowski J."/>
            <person name="Kegler C."/>
            <person name="Knauber T."/>
            <person name="Konietzny S."/>
            <person name="Kopp M."/>
            <person name="Krause L."/>
            <person name="Krug D."/>
            <person name="Linke B."/>
            <person name="Mahmud T."/>
            <person name="Martinez-Arias R."/>
            <person name="McHardy A.C."/>
            <person name="Merai M."/>
            <person name="Meyer F."/>
            <person name="Mormann S."/>
            <person name="Munoz-Dorado J."/>
            <person name="Perez J."/>
            <person name="Pradella S."/>
            <person name="Rachid S."/>
            <person name="Raddatz G."/>
            <person name="Rosenau F."/>
            <person name="Rueckert C."/>
            <person name="Sasse F."/>
            <person name="Scharfe M."/>
            <person name="Schuster S.C."/>
            <person name="Suen G."/>
            <person name="Treuner-Lange A."/>
            <person name="Velicer G.J."/>
            <person name="Vorholter F.-J."/>
            <person name="Weissman K.J."/>
            <person name="Welch R.D."/>
            <person name="Wenzel S.C."/>
            <person name="Whitworth D.E."/>
            <person name="Wilhelm S."/>
            <person name="Wittmann C."/>
            <person name="Bloecker H."/>
            <person name="Puehler A."/>
            <person name="Mueller R."/>
        </authorList>
    </citation>
    <scope>NUCLEOTIDE SEQUENCE [LARGE SCALE GENOMIC DNA]</scope>
    <source>
        <strain>So ce56</strain>
    </source>
</reference>